<accession>Q9ZM60</accession>
<proteinExistence type="inferred from homology"/>
<reference key="1">
    <citation type="journal article" date="1999" name="Nature">
        <title>Genomic sequence comparison of two unrelated isolates of the human gastric pathogen Helicobacter pylori.</title>
        <authorList>
            <person name="Alm R.A."/>
            <person name="Ling L.-S.L."/>
            <person name="Moir D.T."/>
            <person name="King B.L."/>
            <person name="Brown E.D."/>
            <person name="Doig P.C."/>
            <person name="Smith D.R."/>
            <person name="Noonan B."/>
            <person name="Guild B.C."/>
            <person name="deJonge B.L."/>
            <person name="Carmel G."/>
            <person name="Tummino P.J."/>
            <person name="Caruso A."/>
            <person name="Uria-Nickelsen M."/>
            <person name="Mills D.M."/>
            <person name="Ives C."/>
            <person name="Gibson R."/>
            <person name="Merberg D."/>
            <person name="Mills S.D."/>
            <person name="Jiang Q."/>
            <person name="Taylor D.E."/>
            <person name="Vovis G.F."/>
            <person name="Trust T.J."/>
        </authorList>
    </citation>
    <scope>NUCLEOTIDE SEQUENCE [LARGE SCALE GENOMIC DNA]</scope>
    <source>
        <strain>J99 / ATCC 700824</strain>
    </source>
</reference>
<keyword id="KW-0963">Cytoplasm</keyword>
<keyword id="KW-0671">Queuosine biosynthesis</keyword>
<keyword id="KW-0949">S-adenosyl-L-methionine</keyword>
<keyword id="KW-0808">Transferase</keyword>
<feature type="chain" id="PRO_0000165410" description="S-adenosylmethionine:tRNA ribosyltransferase-isomerase">
    <location>
        <begin position="1"/>
        <end position="345"/>
    </location>
</feature>
<comment type="function">
    <text evidence="1">Transfers and isomerizes the ribose moiety from AdoMet to the 7-aminomethyl group of 7-deazaguanine (preQ1-tRNA) to give epoxyqueuosine (oQ-tRNA).</text>
</comment>
<comment type="catalytic activity">
    <reaction evidence="1">
        <text>7-aminomethyl-7-carbaguanosine(34) in tRNA + S-adenosyl-L-methionine = epoxyqueuosine(34) in tRNA + adenine + L-methionine + 2 H(+)</text>
        <dbReference type="Rhea" id="RHEA:32155"/>
        <dbReference type="Rhea" id="RHEA-COMP:10342"/>
        <dbReference type="Rhea" id="RHEA-COMP:18582"/>
        <dbReference type="ChEBI" id="CHEBI:15378"/>
        <dbReference type="ChEBI" id="CHEBI:16708"/>
        <dbReference type="ChEBI" id="CHEBI:57844"/>
        <dbReference type="ChEBI" id="CHEBI:59789"/>
        <dbReference type="ChEBI" id="CHEBI:82833"/>
        <dbReference type="ChEBI" id="CHEBI:194443"/>
        <dbReference type="EC" id="2.4.99.17"/>
    </reaction>
</comment>
<comment type="pathway">
    <text evidence="1">tRNA modification; tRNA-queuosine biosynthesis.</text>
</comment>
<comment type="subunit">
    <text evidence="1">Monomer.</text>
</comment>
<comment type="subcellular location">
    <subcellularLocation>
        <location evidence="1">Cytoplasm</location>
    </subcellularLocation>
</comment>
<comment type="similarity">
    <text evidence="1">Belongs to the QueA family.</text>
</comment>
<gene>
    <name evidence="1" type="primary">queA</name>
    <name type="ordered locus">jhp_0363</name>
</gene>
<sequence length="345" mass="39844">MKEFDLESYDYHLPKELIANYPVLPKEKAKLLVYERRSQTITHTTFEHVLDFFPKNALVVLNDTKVIKARLFGSKHAFLPSKTTEVFFHRFFKGNTALTQIKGKIKVGDKIFFDANYYAEVLELLHNGQRLIAFYDNQTPLNQENILKLLEQYGHMPLPPYIKRADESLDAHEYQSVFAKHIGAVAAPTASLHFSQNALEKLLKDFKHAFLTLHVGAGTFLSVETKDIREHQIHTEVLHIPKKSQEILQESQEVLCIGTTALRSVEYFKRLKNPNQESFECDIFLHLANPIQHVNHLLTNFHLPKSSLLMLVSAMIGLEKTKEIYKIAIEKKYRFYSYGDGMLIL</sequence>
<name>QUEA_HELPJ</name>
<protein>
    <recommendedName>
        <fullName evidence="1">S-adenosylmethionine:tRNA ribosyltransferase-isomerase</fullName>
        <ecNumber evidence="1">2.4.99.17</ecNumber>
    </recommendedName>
    <alternativeName>
        <fullName evidence="1">Queuosine biosynthesis protein QueA</fullName>
    </alternativeName>
</protein>
<dbReference type="EC" id="2.4.99.17" evidence="1"/>
<dbReference type="EMBL" id="AE001439">
    <property type="protein sequence ID" value="AAD05941.1"/>
    <property type="molecule type" value="Genomic_DNA"/>
</dbReference>
<dbReference type="PIR" id="C71942">
    <property type="entry name" value="C71942"/>
</dbReference>
<dbReference type="RefSeq" id="WP_000657381.1">
    <property type="nucleotide sequence ID" value="NC_000921.1"/>
</dbReference>
<dbReference type="SMR" id="Q9ZM60"/>
<dbReference type="KEGG" id="hpj:jhp_0363"/>
<dbReference type="PATRIC" id="fig|85963.30.peg.648"/>
<dbReference type="eggNOG" id="COG0809">
    <property type="taxonomic scope" value="Bacteria"/>
</dbReference>
<dbReference type="UniPathway" id="UPA00392"/>
<dbReference type="Proteomes" id="UP000000804">
    <property type="component" value="Chromosome"/>
</dbReference>
<dbReference type="GO" id="GO:0005737">
    <property type="term" value="C:cytoplasm"/>
    <property type="evidence" value="ECO:0007669"/>
    <property type="project" value="UniProtKB-SubCell"/>
</dbReference>
<dbReference type="GO" id="GO:0051075">
    <property type="term" value="F:S-adenosylmethionine:tRNA ribosyltransferase-isomerase activity"/>
    <property type="evidence" value="ECO:0007669"/>
    <property type="project" value="UniProtKB-EC"/>
</dbReference>
<dbReference type="GO" id="GO:0008616">
    <property type="term" value="P:queuosine biosynthetic process"/>
    <property type="evidence" value="ECO:0007669"/>
    <property type="project" value="UniProtKB-UniRule"/>
</dbReference>
<dbReference type="GO" id="GO:0002099">
    <property type="term" value="P:tRNA wobble guanine modification"/>
    <property type="evidence" value="ECO:0007669"/>
    <property type="project" value="TreeGrafter"/>
</dbReference>
<dbReference type="Gene3D" id="2.40.10.240">
    <property type="entry name" value="QueA-like"/>
    <property type="match status" value="1"/>
</dbReference>
<dbReference type="Gene3D" id="3.40.1780.10">
    <property type="entry name" value="QueA-like"/>
    <property type="match status" value="1"/>
</dbReference>
<dbReference type="HAMAP" id="MF_00113">
    <property type="entry name" value="QueA"/>
    <property type="match status" value="1"/>
</dbReference>
<dbReference type="InterPro" id="IPR003699">
    <property type="entry name" value="QueA"/>
</dbReference>
<dbReference type="InterPro" id="IPR042118">
    <property type="entry name" value="QueA_dom1"/>
</dbReference>
<dbReference type="InterPro" id="IPR042119">
    <property type="entry name" value="QueA_dom2"/>
</dbReference>
<dbReference type="InterPro" id="IPR036100">
    <property type="entry name" value="QueA_sf"/>
</dbReference>
<dbReference type="NCBIfam" id="NF001140">
    <property type="entry name" value="PRK00147.1"/>
    <property type="match status" value="1"/>
</dbReference>
<dbReference type="NCBIfam" id="TIGR00113">
    <property type="entry name" value="queA"/>
    <property type="match status" value="1"/>
</dbReference>
<dbReference type="PANTHER" id="PTHR30307">
    <property type="entry name" value="S-ADENOSYLMETHIONINE:TRNA RIBOSYLTRANSFERASE-ISOMERASE"/>
    <property type="match status" value="1"/>
</dbReference>
<dbReference type="PANTHER" id="PTHR30307:SF0">
    <property type="entry name" value="S-ADENOSYLMETHIONINE:TRNA RIBOSYLTRANSFERASE-ISOMERASE"/>
    <property type="match status" value="1"/>
</dbReference>
<dbReference type="Pfam" id="PF02547">
    <property type="entry name" value="Queuosine_synth"/>
    <property type="match status" value="1"/>
</dbReference>
<dbReference type="SUPFAM" id="SSF111337">
    <property type="entry name" value="QueA-like"/>
    <property type="match status" value="1"/>
</dbReference>
<organism>
    <name type="scientific">Helicobacter pylori (strain J99 / ATCC 700824)</name>
    <name type="common">Campylobacter pylori J99</name>
    <dbReference type="NCBI Taxonomy" id="85963"/>
    <lineage>
        <taxon>Bacteria</taxon>
        <taxon>Pseudomonadati</taxon>
        <taxon>Campylobacterota</taxon>
        <taxon>Epsilonproteobacteria</taxon>
        <taxon>Campylobacterales</taxon>
        <taxon>Helicobacteraceae</taxon>
        <taxon>Helicobacter</taxon>
    </lineage>
</organism>
<evidence type="ECO:0000255" key="1">
    <source>
        <dbReference type="HAMAP-Rule" id="MF_00113"/>
    </source>
</evidence>